<organism>
    <name type="scientific">Burkholderia vietnamiensis (strain G4 / LMG 22486)</name>
    <name type="common">Burkholderia cepacia (strain R1808)</name>
    <dbReference type="NCBI Taxonomy" id="269482"/>
    <lineage>
        <taxon>Bacteria</taxon>
        <taxon>Pseudomonadati</taxon>
        <taxon>Pseudomonadota</taxon>
        <taxon>Betaproteobacteria</taxon>
        <taxon>Burkholderiales</taxon>
        <taxon>Burkholderiaceae</taxon>
        <taxon>Burkholderia</taxon>
        <taxon>Burkholderia cepacia complex</taxon>
    </lineage>
</organism>
<accession>A4JE23</accession>
<sequence length="276" mass="31166">MTHPTELPLSPLSALQFYATAPYPCSYLDGRIARSQVATPSHLINSDIYTELVKAGFRRSGVFTYRPYCDGCRACVPVRVPVRAFTPSRTQRRMWKRHRALVATVSPLHYDEEHYALYMRYQSARHAGGGMDRDSRDQYEQFLLQSRINSRLVEFRDLDASGGEPGKLRMVSMIDILGDGLSSVYTFFEPDDAHTSYGTYNILWQIEQARSLGLPYVYLGYWIRESPKMAYKANFHPLEGLLDGRWKTLDPARVDLPPVDAALARAPLPGGHSGAG</sequence>
<keyword id="KW-0012">Acyltransferase</keyword>
<keyword id="KW-0963">Cytoplasm</keyword>
<keyword id="KW-0808">Transferase</keyword>
<gene>
    <name evidence="1" type="primary">bpt</name>
    <name type="ordered locus">Bcep1808_1519</name>
</gene>
<feature type="chain" id="PRO_1000045131" description="Aspartate/glutamate leucyltransferase">
    <location>
        <begin position="1"/>
        <end position="276"/>
    </location>
</feature>
<proteinExistence type="inferred from homology"/>
<comment type="function">
    <text evidence="1">Functions in the N-end rule pathway of protein degradation where it conjugates Leu from its aminoacyl-tRNA to the N-termini of proteins containing an N-terminal aspartate or glutamate.</text>
</comment>
<comment type="catalytic activity">
    <reaction evidence="1">
        <text>N-terminal L-glutamyl-[protein] + L-leucyl-tRNA(Leu) = N-terminal L-leucyl-L-glutamyl-[protein] + tRNA(Leu) + H(+)</text>
        <dbReference type="Rhea" id="RHEA:50412"/>
        <dbReference type="Rhea" id="RHEA-COMP:9613"/>
        <dbReference type="Rhea" id="RHEA-COMP:9622"/>
        <dbReference type="Rhea" id="RHEA-COMP:12664"/>
        <dbReference type="Rhea" id="RHEA-COMP:12668"/>
        <dbReference type="ChEBI" id="CHEBI:15378"/>
        <dbReference type="ChEBI" id="CHEBI:64721"/>
        <dbReference type="ChEBI" id="CHEBI:78442"/>
        <dbReference type="ChEBI" id="CHEBI:78494"/>
        <dbReference type="ChEBI" id="CHEBI:133041"/>
        <dbReference type="EC" id="2.3.2.29"/>
    </reaction>
</comment>
<comment type="catalytic activity">
    <reaction evidence="1">
        <text>N-terminal L-aspartyl-[protein] + L-leucyl-tRNA(Leu) = N-terminal L-leucyl-L-aspartyl-[protein] + tRNA(Leu) + H(+)</text>
        <dbReference type="Rhea" id="RHEA:50420"/>
        <dbReference type="Rhea" id="RHEA-COMP:9613"/>
        <dbReference type="Rhea" id="RHEA-COMP:9622"/>
        <dbReference type="Rhea" id="RHEA-COMP:12669"/>
        <dbReference type="Rhea" id="RHEA-COMP:12674"/>
        <dbReference type="ChEBI" id="CHEBI:15378"/>
        <dbReference type="ChEBI" id="CHEBI:64720"/>
        <dbReference type="ChEBI" id="CHEBI:78442"/>
        <dbReference type="ChEBI" id="CHEBI:78494"/>
        <dbReference type="ChEBI" id="CHEBI:133042"/>
        <dbReference type="EC" id="2.3.2.29"/>
    </reaction>
</comment>
<comment type="subcellular location">
    <subcellularLocation>
        <location evidence="1">Cytoplasm</location>
    </subcellularLocation>
</comment>
<comment type="similarity">
    <text evidence="1">Belongs to the R-transferase family. Bpt subfamily.</text>
</comment>
<protein>
    <recommendedName>
        <fullName evidence="1">Aspartate/glutamate leucyltransferase</fullName>
        <ecNumber evidence="1">2.3.2.29</ecNumber>
    </recommendedName>
</protein>
<evidence type="ECO:0000255" key="1">
    <source>
        <dbReference type="HAMAP-Rule" id="MF_00689"/>
    </source>
</evidence>
<name>BPT_BURVG</name>
<reference key="1">
    <citation type="submission" date="2007-03" db="EMBL/GenBank/DDBJ databases">
        <title>Complete sequence of chromosome 1 of Burkholderia vietnamiensis G4.</title>
        <authorList>
            <consortium name="US DOE Joint Genome Institute"/>
            <person name="Copeland A."/>
            <person name="Lucas S."/>
            <person name="Lapidus A."/>
            <person name="Barry K."/>
            <person name="Detter J.C."/>
            <person name="Glavina del Rio T."/>
            <person name="Hammon N."/>
            <person name="Israni S."/>
            <person name="Dalin E."/>
            <person name="Tice H."/>
            <person name="Pitluck S."/>
            <person name="Chain P."/>
            <person name="Malfatti S."/>
            <person name="Shin M."/>
            <person name="Vergez L."/>
            <person name="Schmutz J."/>
            <person name="Larimer F."/>
            <person name="Land M."/>
            <person name="Hauser L."/>
            <person name="Kyrpides N."/>
            <person name="Tiedje J."/>
            <person name="Richardson P."/>
        </authorList>
    </citation>
    <scope>NUCLEOTIDE SEQUENCE [LARGE SCALE GENOMIC DNA]</scope>
    <source>
        <strain>G4 / LMG 22486</strain>
    </source>
</reference>
<dbReference type="EC" id="2.3.2.29" evidence="1"/>
<dbReference type="EMBL" id="CP000614">
    <property type="protein sequence ID" value="ABO54526.1"/>
    <property type="molecule type" value="Genomic_DNA"/>
</dbReference>
<dbReference type="SMR" id="A4JE23"/>
<dbReference type="KEGG" id="bvi:Bcep1808_1519"/>
<dbReference type="eggNOG" id="COG2935">
    <property type="taxonomic scope" value="Bacteria"/>
</dbReference>
<dbReference type="HOGENOM" id="CLU_077607_0_0_4"/>
<dbReference type="Proteomes" id="UP000002287">
    <property type="component" value="Chromosome 1"/>
</dbReference>
<dbReference type="GO" id="GO:0005737">
    <property type="term" value="C:cytoplasm"/>
    <property type="evidence" value="ECO:0007669"/>
    <property type="project" value="UniProtKB-SubCell"/>
</dbReference>
<dbReference type="GO" id="GO:0004057">
    <property type="term" value="F:arginyl-tRNA--protein transferase activity"/>
    <property type="evidence" value="ECO:0007669"/>
    <property type="project" value="InterPro"/>
</dbReference>
<dbReference type="GO" id="GO:0008914">
    <property type="term" value="F:leucyl-tRNA--protein transferase activity"/>
    <property type="evidence" value="ECO:0007669"/>
    <property type="project" value="UniProtKB-UniRule"/>
</dbReference>
<dbReference type="GO" id="GO:0071596">
    <property type="term" value="P:ubiquitin-dependent protein catabolic process via the N-end rule pathway"/>
    <property type="evidence" value="ECO:0007669"/>
    <property type="project" value="InterPro"/>
</dbReference>
<dbReference type="HAMAP" id="MF_00689">
    <property type="entry name" value="Bpt"/>
    <property type="match status" value="1"/>
</dbReference>
<dbReference type="InterPro" id="IPR016181">
    <property type="entry name" value="Acyl_CoA_acyltransferase"/>
</dbReference>
<dbReference type="InterPro" id="IPR017138">
    <property type="entry name" value="Asp_Glu_LeuTrfase"/>
</dbReference>
<dbReference type="InterPro" id="IPR030700">
    <property type="entry name" value="N-end_Aminoacyl_Trfase"/>
</dbReference>
<dbReference type="InterPro" id="IPR007472">
    <property type="entry name" value="N-end_Aminoacyl_Trfase_C"/>
</dbReference>
<dbReference type="InterPro" id="IPR007471">
    <property type="entry name" value="N-end_Aminoacyl_Trfase_N"/>
</dbReference>
<dbReference type="NCBIfam" id="NF002341">
    <property type="entry name" value="PRK01305.1-1"/>
    <property type="match status" value="1"/>
</dbReference>
<dbReference type="NCBIfam" id="NF002342">
    <property type="entry name" value="PRK01305.1-3"/>
    <property type="match status" value="1"/>
</dbReference>
<dbReference type="NCBIfam" id="NF002346">
    <property type="entry name" value="PRK01305.2-3"/>
    <property type="match status" value="1"/>
</dbReference>
<dbReference type="PANTHER" id="PTHR21367">
    <property type="entry name" value="ARGININE-TRNA-PROTEIN TRANSFERASE 1"/>
    <property type="match status" value="1"/>
</dbReference>
<dbReference type="PANTHER" id="PTHR21367:SF1">
    <property type="entry name" value="ARGINYL-TRNA--PROTEIN TRANSFERASE 1"/>
    <property type="match status" value="1"/>
</dbReference>
<dbReference type="Pfam" id="PF04377">
    <property type="entry name" value="ATE_C"/>
    <property type="match status" value="1"/>
</dbReference>
<dbReference type="Pfam" id="PF04376">
    <property type="entry name" value="ATE_N"/>
    <property type="match status" value="1"/>
</dbReference>
<dbReference type="PIRSF" id="PIRSF037208">
    <property type="entry name" value="ATE_pro_prd"/>
    <property type="match status" value="1"/>
</dbReference>
<dbReference type="SUPFAM" id="SSF55729">
    <property type="entry name" value="Acyl-CoA N-acyltransferases (Nat)"/>
    <property type="match status" value="1"/>
</dbReference>